<evidence type="ECO:0000250" key="1"/>
<evidence type="ECO:0000255" key="2"/>
<evidence type="ECO:0000305" key="3"/>
<evidence type="ECO:0000312" key="4">
    <source>
        <dbReference type="HGNC" id="HGNC:38058"/>
    </source>
</evidence>
<keyword id="KW-0044">Antibiotic</keyword>
<keyword id="KW-0929">Antimicrobial</keyword>
<keyword id="KW-0211">Defensin</keyword>
<keyword id="KW-1015">Disulfide bond</keyword>
<keyword id="KW-1185">Reference proteome</keyword>
<keyword id="KW-0964">Secreted</keyword>
<keyword id="KW-0732">Signal</keyword>
<accession>A0A096LNP1</accession>
<gene>
    <name evidence="4" type="primary">DEFB131B</name>
</gene>
<organism>
    <name type="scientific">Homo sapiens</name>
    <name type="common">Human</name>
    <dbReference type="NCBI Taxonomy" id="9606"/>
    <lineage>
        <taxon>Eukaryota</taxon>
        <taxon>Metazoa</taxon>
        <taxon>Chordata</taxon>
        <taxon>Craniata</taxon>
        <taxon>Vertebrata</taxon>
        <taxon>Euteleostomi</taxon>
        <taxon>Mammalia</taxon>
        <taxon>Eutheria</taxon>
        <taxon>Euarchontoglires</taxon>
        <taxon>Primates</taxon>
        <taxon>Haplorrhini</taxon>
        <taxon>Catarrhini</taxon>
        <taxon>Hominidae</taxon>
        <taxon>Homo</taxon>
    </lineage>
</organism>
<reference key="1">
    <citation type="journal article" date="2006" name="Nature">
        <title>Human chromosome 11 DNA sequence and analysis including novel gene identification.</title>
        <authorList>
            <person name="Taylor T.D."/>
            <person name="Noguchi H."/>
            <person name="Totoki Y."/>
            <person name="Toyoda A."/>
            <person name="Kuroki Y."/>
            <person name="Dewar K."/>
            <person name="Lloyd C."/>
            <person name="Itoh T."/>
            <person name="Takeda T."/>
            <person name="Kim D.-W."/>
            <person name="She X."/>
            <person name="Barlow K.F."/>
            <person name="Bloom T."/>
            <person name="Bruford E."/>
            <person name="Chang J.L."/>
            <person name="Cuomo C.A."/>
            <person name="Eichler E."/>
            <person name="FitzGerald M.G."/>
            <person name="Jaffe D.B."/>
            <person name="LaButti K."/>
            <person name="Nicol R."/>
            <person name="Park H.-S."/>
            <person name="Seaman C."/>
            <person name="Sougnez C."/>
            <person name="Yang X."/>
            <person name="Zimmer A.R."/>
            <person name="Zody M.C."/>
            <person name="Birren B.W."/>
            <person name="Nusbaum C."/>
            <person name="Fujiyama A."/>
            <person name="Hattori M."/>
            <person name="Rogers J."/>
            <person name="Lander E.S."/>
            <person name="Sakaki Y."/>
        </authorList>
    </citation>
    <scope>NUCLEOTIDE SEQUENCE [LARGE SCALE GENOMIC DNA]</scope>
</reference>
<proteinExistence type="inferred from homology"/>
<comment type="function">
    <text evidence="3">Has antibacterial activity.</text>
</comment>
<comment type="subcellular location">
    <subcellularLocation>
        <location evidence="3">Secreted</location>
    </subcellularLocation>
</comment>
<comment type="similarity">
    <text evidence="3">Belongs to the beta-defensin family.</text>
</comment>
<dbReference type="EMBL" id="AP002495">
    <property type="status" value="NOT_ANNOTATED_CDS"/>
    <property type="molecule type" value="Genomic_DNA"/>
</dbReference>
<dbReference type="CCDS" id="CCDS76450.1"/>
<dbReference type="RefSeq" id="NP_001229782.1">
    <property type="nucleotide sequence ID" value="NM_001242853.1"/>
</dbReference>
<dbReference type="SMR" id="A0A096LNP1"/>
<dbReference type="FunCoup" id="A0A096LNP1">
    <property type="interactions" value="13"/>
</dbReference>
<dbReference type="BioMuta" id="DEFB131B"/>
<dbReference type="PaxDb" id="9606-ENSP00000485141"/>
<dbReference type="PeptideAtlas" id="A0A096LNP1"/>
<dbReference type="DNASU" id="100129216"/>
<dbReference type="Ensembl" id="ENST00000530210.1">
    <property type="protein sequence ID" value="ENSP00000485141.1"/>
    <property type="gene ID" value="ENSG00000225805.4"/>
</dbReference>
<dbReference type="GeneID" id="100129216"/>
<dbReference type="KEGG" id="hsa:100129216"/>
<dbReference type="MANE-Select" id="ENST00000530210.1">
    <property type="protein sequence ID" value="ENSP00000485141.1"/>
    <property type="RefSeq nucleotide sequence ID" value="NM_001242853.1"/>
    <property type="RefSeq protein sequence ID" value="NP_001229782.1"/>
</dbReference>
<dbReference type="UCSC" id="uc021qmu.1">
    <property type="organism name" value="human"/>
</dbReference>
<dbReference type="AGR" id="HGNC:38058"/>
<dbReference type="CTD" id="100129216"/>
<dbReference type="GeneCards" id="DEFB131B"/>
<dbReference type="HGNC" id="HGNC:38058">
    <property type="gene designation" value="DEFB131B"/>
</dbReference>
<dbReference type="HPA" id="ENSG00000225805">
    <property type="expression patterns" value="Tissue enriched (epididymis)"/>
</dbReference>
<dbReference type="neXtProt" id="NX_A0A096LNP1"/>
<dbReference type="VEuPathDB" id="HostDB:ENSG00000225805"/>
<dbReference type="eggNOG" id="ENOG502TEDN">
    <property type="taxonomic scope" value="Eukaryota"/>
</dbReference>
<dbReference type="GeneTree" id="ENSGT00390000001538"/>
<dbReference type="HOGENOM" id="CLU_203372_0_0_1"/>
<dbReference type="InParanoid" id="A0A096LNP1"/>
<dbReference type="OMA" id="PSEYYYH"/>
<dbReference type="OrthoDB" id="9524787at2759"/>
<dbReference type="PAN-GO" id="A0A096LNP1">
    <property type="GO annotations" value="1 GO annotation based on evolutionary models"/>
</dbReference>
<dbReference type="BioGRID-ORCS" id="100129216">
    <property type="hits" value="7 hits in 187 CRISPR screens"/>
</dbReference>
<dbReference type="GenomeRNAi" id="100129216"/>
<dbReference type="Pharos" id="A0A096LNP1">
    <property type="development level" value="Tdark"/>
</dbReference>
<dbReference type="PRO" id="PR:A0A096LNP1"/>
<dbReference type="Proteomes" id="UP000005640">
    <property type="component" value="Chromosome 11"/>
</dbReference>
<dbReference type="RNAct" id="A0A096LNP1">
    <property type="molecule type" value="protein"/>
</dbReference>
<dbReference type="Bgee" id="ENSG00000225805">
    <property type="expression patterns" value="Expressed in corpus callosum and 87 other cell types or tissues"/>
</dbReference>
<dbReference type="GO" id="GO:0005615">
    <property type="term" value="C:extracellular space"/>
    <property type="evidence" value="ECO:0000318"/>
    <property type="project" value="GO_Central"/>
</dbReference>
<dbReference type="GO" id="GO:0042742">
    <property type="term" value="P:defense response to bacterium"/>
    <property type="evidence" value="ECO:0007669"/>
    <property type="project" value="UniProtKB-KW"/>
</dbReference>
<dbReference type="GO" id="GO:0045087">
    <property type="term" value="P:innate immune response"/>
    <property type="evidence" value="ECO:0007669"/>
    <property type="project" value="InterPro"/>
</dbReference>
<dbReference type="InterPro" id="IPR025933">
    <property type="entry name" value="Beta_defensin_dom"/>
</dbReference>
<dbReference type="PANTHER" id="PTHR47900">
    <property type="entry name" value="BETA-DEFENSIN 131A"/>
    <property type="match status" value="1"/>
</dbReference>
<dbReference type="PANTHER" id="PTHR47900:SF2">
    <property type="entry name" value="BETA-DEFENSIN 131B"/>
    <property type="match status" value="1"/>
</dbReference>
<dbReference type="Pfam" id="PF13841">
    <property type="entry name" value="Defensin_beta_2"/>
    <property type="match status" value="1"/>
</dbReference>
<protein>
    <recommendedName>
        <fullName evidence="3">Beta-defensin 131B</fullName>
    </recommendedName>
    <alternativeName>
        <fullName evidence="4">Defensin, beta 131</fullName>
    </alternativeName>
</protein>
<name>D131B_HUMAN</name>
<sequence length="70" mass="8156">MRVLFFVFGVLSLMSTVPPTRSFTSNDECPSEYYHCRLKCNADEHAIRYCADFSICCKLKIIQIDGQKKW</sequence>
<feature type="signal peptide" evidence="2">
    <location>
        <begin position="1"/>
        <end position="22"/>
    </location>
</feature>
<feature type="peptide" id="PRO_0000441044" description="Beta-defensin 131B">
    <location>
        <begin position="23"/>
        <end position="70"/>
    </location>
</feature>
<feature type="disulfide bond" evidence="1">
    <location>
        <begin position="29"/>
        <end position="56"/>
    </location>
</feature>
<feature type="disulfide bond" evidence="1">
    <location>
        <begin position="36"/>
        <end position="50"/>
    </location>
</feature>
<feature type="disulfide bond" evidence="1">
    <location>
        <begin position="40"/>
        <end position="57"/>
    </location>
</feature>